<keyword id="KW-0274">FAD</keyword>
<keyword id="KW-0285">Flavoprotein</keyword>
<keyword id="KW-0325">Glycoprotein</keyword>
<keyword id="KW-0560">Oxidoreductase</keyword>
<keyword id="KW-1185">Reference proteome</keyword>
<keyword id="KW-0964">Secreted</keyword>
<keyword id="KW-0732">Signal</keyword>
<organism>
    <name type="scientific">Oryza sativa subsp. japonica</name>
    <name type="common">Rice</name>
    <dbReference type="NCBI Taxonomy" id="39947"/>
    <lineage>
        <taxon>Eukaryota</taxon>
        <taxon>Viridiplantae</taxon>
        <taxon>Streptophyta</taxon>
        <taxon>Embryophyta</taxon>
        <taxon>Tracheophyta</taxon>
        <taxon>Spermatophyta</taxon>
        <taxon>Magnoliopsida</taxon>
        <taxon>Liliopsida</taxon>
        <taxon>Poales</taxon>
        <taxon>Poaceae</taxon>
        <taxon>BOP clade</taxon>
        <taxon>Oryzoideae</taxon>
        <taxon>Oryzeae</taxon>
        <taxon>Oryzinae</taxon>
        <taxon>Oryza</taxon>
        <taxon>Oryza sativa</taxon>
    </lineage>
</organism>
<feature type="signal peptide" evidence="6">
    <location>
        <begin position="1"/>
        <end position="27"/>
    </location>
</feature>
<feature type="chain" id="PRO_0000394207" description="Cytokinin dehydrogenase 4">
    <location>
        <begin position="28"/>
        <end position="529"/>
    </location>
</feature>
<feature type="domain" description="FAD-binding PCMH-type" evidence="7">
    <location>
        <begin position="63"/>
        <end position="244"/>
    </location>
</feature>
<feature type="binding site" evidence="4">
    <location>
        <position position="99"/>
    </location>
    <ligand>
        <name>FAD</name>
        <dbReference type="ChEBI" id="CHEBI:57692"/>
    </ligand>
</feature>
<feature type="binding site" evidence="5">
    <location>
        <position position="101"/>
    </location>
    <ligand>
        <name>FAD</name>
        <dbReference type="ChEBI" id="CHEBI:57692"/>
    </ligand>
</feature>
<feature type="binding site" evidence="5">
    <location>
        <position position="103"/>
    </location>
    <ligand>
        <name>FAD</name>
        <dbReference type="ChEBI" id="CHEBI:57692"/>
    </ligand>
</feature>
<feature type="binding site" evidence="5">
    <location>
        <position position="105"/>
    </location>
    <ligand>
        <name>FAD</name>
        <dbReference type="ChEBI" id="CHEBI:57692"/>
    </ligand>
</feature>
<feature type="binding site" evidence="5">
    <location>
        <position position="109"/>
    </location>
    <ligand>
        <name>FAD</name>
        <dbReference type="ChEBI" id="CHEBI:57692"/>
    </ligand>
</feature>
<feature type="binding site" evidence="5">
    <location>
        <position position="168"/>
    </location>
    <ligand>
        <name>FAD</name>
        <dbReference type="ChEBI" id="CHEBI:57692"/>
    </ligand>
</feature>
<feature type="binding site" evidence="5">
    <location>
        <position position="173"/>
    </location>
    <ligand>
        <name>FAD</name>
        <dbReference type="ChEBI" id="CHEBI:57692"/>
    </ligand>
</feature>
<feature type="binding site" evidence="5">
    <location>
        <position position="179"/>
    </location>
    <ligand>
        <name>FAD</name>
        <dbReference type="ChEBI" id="CHEBI:57692"/>
    </ligand>
</feature>
<feature type="binding site" evidence="5">
    <location>
        <position position="183"/>
    </location>
    <ligand>
        <name>FAD</name>
        <dbReference type="ChEBI" id="CHEBI:57692"/>
    </ligand>
</feature>
<feature type="binding site" evidence="5">
    <location>
        <position position="234"/>
    </location>
    <ligand>
        <name>FAD</name>
        <dbReference type="ChEBI" id="CHEBI:57692"/>
    </ligand>
</feature>
<feature type="binding site" evidence="5">
    <location>
        <position position="479"/>
    </location>
    <ligand>
        <name>FAD</name>
        <dbReference type="ChEBI" id="CHEBI:57692"/>
    </ligand>
</feature>
<feature type="binding site" evidence="5">
    <location>
        <position position="517"/>
    </location>
    <ligand>
        <name>FAD</name>
        <dbReference type="ChEBI" id="CHEBI:57692"/>
    </ligand>
</feature>
<feature type="modified residue" description="Pros-8alpha-FAD histidine" evidence="5">
    <location>
        <position position="104"/>
    </location>
</feature>
<feature type="glycosylation site" description="N-linked (GlcNAc...) asparagine" evidence="6">
    <location>
        <position position="285"/>
    </location>
</feature>
<feature type="glycosylation site" description="N-linked (GlcNAc...) asparagine" evidence="6">
    <location>
        <position position="419"/>
    </location>
</feature>
<feature type="glycosylation site" description="N-linked (GlcNAc...) asparagine" evidence="6">
    <location>
        <position position="425"/>
    </location>
</feature>
<feature type="sequence conflict" description="In Ref. 5; AK121317." evidence="9" ref="5">
    <original>D</original>
    <variation>G</variation>
    <location>
        <position position="508"/>
    </location>
</feature>
<dbReference type="EC" id="1.5.99.12" evidence="3"/>
<dbReference type="EMBL" id="AP003412">
    <property type="protein sequence ID" value="BAD87612.1"/>
    <property type="molecule type" value="Genomic_DNA"/>
</dbReference>
<dbReference type="EMBL" id="AP008207">
    <property type="protein sequence ID" value="BAF07267.1"/>
    <property type="molecule type" value="Genomic_DNA"/>
</dbReference>
<dbReference type="EMBL" id="AP014957">
    <property type="protein sequence ID" value="BAS76147.1"/>
    <property type="molecule type" value="Genomic_DNA"/>
</dbReference>
<dbReference type="EMBL" id="AK121317">
    <property type="status" value="NOT_ANNOTATED_CDS"/>
    <property type="molecule type" value="mRNA"/>
</dbReference>
<dbReference type="RefSeq" id="XP_015621343.1">
    <property type="nucleotide sequence ID" value="XM_015765857.1"/>
</dbReference>
<dbReference type="SMR" id="Q5JLP4"/>
<dbReference type="FunCoup" id="Q5JLP4">
    <property type="interactions" value="23"/>
</dbReference>
<dbReference type="STRING" id="39947.Q5JLP4"/>
<dbReference type="GlyCosmos" id="Q5JLP4">
    <property type="glycosylation" value="3 sites, No reported glycans"/>
</dbReference>
<dbReference type="PaxDb" id="39947-Q5JLP4"/>
<dbReference type="EnsemblPlants" id="Os01t0940000-01">
    <property type="protein sequence ID" value="Os01t0940000-01"/>
    <property type="gene ID" value="Os01g0940000"/>
</dbReference>
<dbReference type="Gramene" id="Os01t0940000-01">
    <property type="protein sequence ID" value="Os01t0940000-01"/>
    <property type="gene ID" value="Os01g0940000"/>
</dbReference>
<dbReference type="KEGG" id="dosa:Os01g0940000"/>
<dbReference type="eggNOG" id="KOG1231">
    <property type="taxonomic scope" value="Eukaryota"/>
</dbReference>
<dbReference type="HOGENOM" id="CLU_024955_1_0_1"/>
<dbReference type="InParanoid" id="Q5JLP4"/>
<dbReference type="OMA" id="TVHKFAK"/>
<dbReference type="OrthoDB" id="415825at2759"/>
<dbReference type="Proteomes" id="UP000000763">
    <property type="component" value="Chromosome 1"/>
</dbReference>
<dbReference type="Proteomes" id="UP000059680">
    <property type="component" value="Chromosome 1"/>
</dbReference>
<dbReference type="GO" id="GO:0005576">
    <property type="term" value="C:extracellular region"/>
    <property type="evidence" value="ECO:0007669"/>
    <property type="project" value="UniProtKB-SubCell"/>
</dbReference>
<dbReference type="GO" id="GO:0019139">
    <property type="term" value="F:cytokinin dehydrogenase activity"/>
    <property type="evidence" value="ECO:0000305"/>
    <property type="project" value="Gramene"/>
</dbReference>
<dbReference type="GO" id="GO:0071949">
    <property type="term" value="F:FAD binding"/>
    <property type="evidence" value="ECO:0007669"/>
    <property type="project" value="InterPro"/>
</dbReference>
<dbReference type="GO" id="GO:0016491">
    <property type="term" value="F:oxidoreductase activity"/>
    <property type="evidence" value="ECO:0000318"/>
    <property type="project" value="GO_Central"/>
</dbReference>
<dbReference type="GO" id="GO:0009690">
    <property type="term" value="P:cytokinin metabolic process"/>
    <property type="evidence" value="ECO:0007669"/>
    <property type="project" value="InterPro"/>
</dbReference>
<dbReference type="FunFam" id="3.40.462.10:FF:000001">
    <property type="entry name" value="Cytokinin dehydrogenase 2"/>
    <property type="match status" value="1"/>
</dbReference>
<dbReference type="Gene3D" id="3.30.465.10">
    <property type="match status" value="1"/>
</dbReference>
<dbReference type="Gene3D" id="3.40.462.10">
    <property type="entry name" value="FAD-linked oxidases, C-terminal domain"/>
    <property type="match status" value="1"/>
</dbReference>
<dbReference type="Gene3D" id="3.30.43.10">
    <property type="entry name" value="Uridine Diphospho-n-acetylenolpyruvylglucosamine Reductase, domain 2"/>
    <property type="match status" value="1"/>
</dbReference>
<dbReference type="InterPro" id="IPR016170">
    <property type="entry name" value="Cytok_DH_C_sf"/>
</dbReference>
<dbReference type="InterPro" id="IPR015345">
    <property type="entry name" value="Cytokinin_DH_FAD/cytokin-bd"/>
</dbReference>
<dbReference type="InterPro" id="IPR016166">
    <property type="entry name" value="FAD-bd_PCMH"/>
</dbReference>
<dbReference type="InterPro" id="IPR036318">
    <property type="entry name" value="FAD-bd_PCMH-like_sf"/>
</dbReference>
<dbReference type="InterPro" id="IPR016167">
    <property type="entry name" value="FAD-bd_PCMH_sub1"/>
</dbReference>
<dbReference type="InterPro" id="IPR016169">
    <property type="entry name" value="FAD-bd_PCMH_sub2"/>
</dbReference>
<dbReference type="InterPro" id="IPR016164">
    <property type="entry name" value="FAD-linked_Oxase-like_C"/>
</dbReference>
<dbReference type="InterPro" id="IPR050432">
    <property type="entry name" value="FAD-linked_Oxidoreductases_BP"/>
</dbReference>
<dbReference type="InterPro" id="IPR006094">
    <property type="entry name" value="Oxid_FAD_bind_N"/>
</dbReference>
<dbReference type="InterPro" id="IPR006093">
    <property type="entry name" value="Oxy_OxRdtase_FAD_BS"/>
</dbReference>
<dbReference type="PANTHER" id="PTHR13878:SF53">
    <property type="entry name" value="CYTOKININ DEHYDROGENASE 6"/>
    <property type="match status" value="1"/>
</dbReference>
<dbReference type="PANTHER" id="PTHR13878">
    <property type="entry name" value="GULONOLACTONE OXIDASE"/>
    <property type="match status" value="1"/>
</dbReference>
<dbReference type="Pfam" id="PF09265">
    <property type="entry name" value="Cytokin-bind"/>
    <property type="match status" value="1"/>
</dbReference>
<dbReference type="Pfam" id="PF01565">
    <property type="entry name" value="FAD_binding_4"/>
    <property type="match status" value="1"/>
</dbReference>
<dbReference type="SUPFAM" id="SSF56176">
    <property type="entry name" value="FAD-binding/transporter-associated domain-like"/>
    <property type="match status" value="1"/>
</dbReference>
<dbReference type="SUPFAM" id="SSF55103">
    <property type="entry name" value="FAD-linked oxidases, C-terminal domain"/>
    <property type="match status" value="1"/>
</dbReference>
<dbReference type="PROSITE" id="PS51387">
    <property type="entry name" value="FAD_PCMH"/>
    <property type="match status" value="1"/>
</dbReference>
<dbReference type="PROSITE" id="PS00862">
    <property type="entry name" value="OX2_COVAL_FAD"/>
    <property type="match status" value="1"/>
</dbReference>
<protein>
    <recommendedName>
        <fullName>Cytokinin dehydrogenase 4</fullName>
        <ecNumber evidence="3">1.5.99.12</ecNumber>
    </recommendedName>
    <alternativeName>
        <fullName>Cytokinin oxidase 4</fullName>
        <shortName>OsCKX4</shortName>
    </alternativeName>
</protein>
<gene>
    <name type="primary">CKX4</name>
    <name type="ordered locus">Os01g0940000</name>
    <name type="ordered locus">LOC_Os01g71310</name>
    <name type="ORF">B1150F11.25</name>
</gene>
<evidence type="ECO:0000250" key="1"/>
<evidence type="ECO:0000250" key="2">
    <source>
        <dbReference type="UniProtKB" id="Q6Z955"/>
    </source>
</evidence>
<evidence type="ECO:0000250" key="3">
    <source>
        <dbReference type="UniProtKB" id="Q8LNV6"/>
    </source>
</evidence>
<evidence type="ECO:0000250" key="4">
    <source>
        <dbReference type="UniProtKB" id="Q9FUJ1"/>
    </source>
</evidence>
<evidence type="ECO:0000250" key="5">
    <source>
        <dbReference type="UniProtKB" id="Q9T0N8"/>
    </source>
</evidence>
<evidence type="ECO:0000255" key="6"/>
<evidence type="ECO:0000255" key="7">
    <source>
        <dbReference type="PROSITE-ProRule" id="PRU00718"/>
    </source>
</evidence>
<evidence type="ECO:0000269" key="8">
    <source>
    </source>
</evidence>
<evidence type="ECO:0000305" key="9"/>
<reference key="1">
    <citation type="journal article" date="2002" name="Nature">
        <title>The genome sequence and structure of rice chromosome 1.</title>
        <authorList>
            <person name="Sasaki T."/>
            <person name="Matsumoto T."/>
            <person name="Yamamoto K."/>
            <person name="Sakata K."/>
            <person name="Baba T."/>
            <person name="Katayose Y."/>
            <person name="Wu J."/>
            <person name="Niimura Y."/>
            <person name="Cheng Z."/>
            <person name="Nagamura Y."/>
            <person name="Antonio B.A."/>
            <person name="Kanamori H."/>
            <person name="Hosokawa S."/>
            <person name="Masukawa M."/>
            <person name="Arikawa K."/>
            <person name="Chiden Y."/>
            <person name="Hayashi M."/>
            <person name="Okamoto M."/>
            <person name="Ando T."/>
            <person name="Aoki H."/>
            <person name="Arita K."/>
            <person name="Hamada M."/>
            <person name="Harada C."/>
            <person name="Hijishita S."/>
            <person name="Honda M."/>
            <person name="Ichikawa Y."/>
            <person name="Idonuma A."/>
            <person name="Iijima M."/>
            <person name="Ikeda M."/>
            <person name="Ikeno M."/>
            <person name="Ito S."/>
            <person name="Ito T."/>
            <person name="Ito Y."/>
            <person name="Ito Y."/>
            <person name="Iwabuchi A."/>
            <person name="Kamiya K."/>
            <person name="Karasawa W."/>
            <person name="Katagiri S."/>
            <person name="Kikuta A."/>
            <person name="Kobayashi N."/>
            <person name="Kono I."/>
            <person name="Machita K."/>
            <person name="Maehara T."/>
            <person name="Mizuno H."/>
            <person name="Mizubayashi T."/>
            <person name="Mukai Y."/>
            <person name="Nagasaki H."/>
            <person name="Nakashima M."/>
            <person name="Nakama Y."/>
            <person name="Nakamichi Y."/>
            <person name="Nakamura M."/>
            <person name="Namiki N."/>
            <person name="Negishi M."/>
            <person name="Ohta I."/>
            <person name="Ono N."/>
            <person name="Saji S."/>
            <person name="Sakai K."/>
            <person name="Shibata M."/>
            <person name="Shimokawa T."/>
            <person name="Shomura A."/>
            <person name="Song J."/>
            <person name="Takazaki Y."/>
            <person name="Terasawa K."/>
            <person name="Tsuji K."/>
            <person name="Waki K."/>
            <person name="Yamagata H."/>
            <person name="Yamane H."/>
            <person name="Yoshiki S."/>
            <person name="Yoshihara R."/>
            <person name="Yukawa K."/>
            <person name="Zhong H."/>
            <person name="Iwama H."/>
            <person name="Endo T."/>
            <person name="Ito H."/>
            <person name="Hahn J.H."/>
            <person name="Kim H.-I."/>
            <person name="Eun M.-Y."/>
            <person name="Yano M."/>
            <person name="Jiang J."/>
            <person name="Gojobori T."/>
        </authorList>
    </citation>
    <scope>NUCLEOTIDE SEQUENCE [LARGE SCALE GENOMIC DNA]</scope>
    <source>
        <strain>cv. Nipponbare</strain>
    </source>
</reference>
<reference key="2">
    <citation type="journal article" date="2005" name="Nature">
        <title>The map-based sequence of the rice genome.</title>
        <authorList>
            <consortium name="International rice genome sequencing project (IRGSP)"/>
        </authorList>
    </citation>
    <scope>NUCLEOTIDE SEQUENCE [LARGE SCALE GENOMIC DNA]</scope>
    <source>
        <strain>cv. Nipponbare</strain>
    </source>
</reference>
<reference key="3">
    <citation type="journal article" date="2008" name="Nucleic Acids Res.">
        <title>The rice annotation project database (RAP-DB): 2008 update.</title>
        <authorList>
            <consortium name="The rice annotation project (RAP)"/>
        </authorList>
    </citation>
    <scope>GENOME REANNOTATION</scope>
    <source>
        <strain>cv. Nipponbare</strain>
    </source>
</reference>
<reference key="4">
    <citation type="journal article" date="2013" name="Rice">
        <title>Improvement of the Oryza sativa Nipponbare reference genome using next generation sequence and optical map data.</title>
        <authorList>
            <person name="Kawahara Y."/>
            <person name="de la Bastide M."/>
            <person name="Hamilton J.P."/>
            <person name="Kanamori H."/>
            <person name="McCombie W.R."/>
            <person name="Ouyang S."/>
            <person name="Schwartz D.C."/>
            <person name="Tanaka T."/>
            <person name="Wu J."/>
            <person name="Zhou S."/>
            <person name="Childs K.L."/>
            <person name="Davidson R.M."/>
            <person name="Lin H."/>
            <person name="Quesada-Ocampo L."/>
            <person name="Vaillancourt B."/>
            <person name="Sakai H."/>
            <person name="Lee S.S."/>
            <person name="Kim J."/>
            <person name="Numa H."/>
            <person name="Itoh T."/>
            <person name="Buell C.R."/>
            <person name="Matsumoto T."/>
        </authorList>
    </citation>
    <scope>GENOME REANNOTATION</scope>
    <source>
        <strain>cv. Nipponbare</strain>
    </source>
</reference>
<reference key="5">
    <citation type="journal article" date="2003" name="Science">
        <title>Collection, mapping, and annotation of over 28,000 cDNA clones from japonica rice.</title>
        <authorList>
            <consortium name="The rice full-length cDNA consortium"/>
        </authorList>
    </citation>
    <scope>NUCLEOTIDE SEQUENCE [LARGE SCALE MRNA]</scope>
    <source>
        <strain>cv. Nipponbare</strain>
    </source>
</reference>
<reference key="6">
    <citation type="journal article" date="2003" name="J. Plant Res.">
        <title>Structure and function of cytokinin oxidase/dehydrogenase genes of maize, rice, Arabidopsis and other species.</title>
        <authorList>
            <person name="Schmuelling T."/>
            <person name="Werner T."/>
            <person name="Riefler M."/>
            <person name="Krupkova E."/>
            <person name="Bartrina y Manns I."/>
        </authorList>
    </citation>
    <scope>REVIEW</scope>
</reference>
<reference key="7">
    <citation type="journal article" date="2005" name="Science">
        <title>Cytokinin oxidase regulates rice grain production.</title>
        <authorList>
            <person name="Ashikari M."/>
            <person name="Sakakibara H."/>
            <person name="Lin S."/>
            <person name="Yamamoto T."/>
            <person name="Takashi T."/>
            <person name="Nishimura A."/>
            <person name="Angeles E.R."/>
            <person name="Qian Q."/>
            <person name="Kitano H."/>
            <person name="Matsuoka M."/>
        </authorList>
    </citation>
    <scope>TISSUE SPECIFICITY</scope>
    <scope>GENE FAMILY</scope>
    <scope>NOMENCLATURE</scope>
    <source>
        <strain>cv. Koshihikari</strain>
    </source>
</reference>
<comment type="function">
    <text evidence="2">Catalyzes the oxidation of cytokinins, a family of N(6)-substituted adenine derivatives that are plant hormones, where the substituent is an isopentenyl group.</text>
</comment>
<comment type="catalytic activity">
    <reaction evidence="3">
        <text>N(6)-dimethylallyladenine + A + H2O = 3-methyl-2-butenal + adenine + AH2</text>
        <dbReference type="Rhea" id="RHEA:13625"/>
        <dbReference type="ChEBI" id="CHEBI:13193"/>
        <dbReference type="ChEBI" id="CHEBI:15377"/>
        <dbReference type="ChEBI" id="CHEBI:15825"/>
        <dbReference type="ChEBI" id="CHEBI:16708"/>
        <dbReference type="ChEBI" id="CHEBI:17499"/>
        <dbReference type="ChEBI" id="CHEBI:17660"/>
        <dbReference type="EC" id="1.5.99.12"/>
    </reaction>
</comment>
<comment type="cofactor">
    <cofactor evidence="3">
        <name>FAD</name>
        <dbReference type="ChEBI" id="CHEBI:57692"/>
    </cofactor>
</comment>
<comment type="subunit">
    <text evidence="1">Monomer.</text>
</comment>
<comment type="subcellular location">
    <subcellularLocation>
        <location evidence="1">Secreted</location>
        <location evidence="1">Extracellular space</location>
    </subcellularLocation>
</comment>
<comment type="tissue specificity">
    <text evidence="8">Expressed in inflorescence meristems.</text>
</comment>
<comment type="similarity">
    <text evidence="9">Belongs to the oxygen-dependent FAD-linked oxidoreductase family.</text>
</comment>
<name>CKX4_ORYSJ</name>
<accession>Q5JLP4</accession>
<accession>A0A0P0VCJ9</accession>
<proteinExistence type="evidence at transcript level"/>
<sequence length="529" mass="58427">MRGAMKPSIVHCLKLLMLLALGGVTMHVPDEDDVVASLGALRLDGHFSFDDAHAAARDFGNRCSLLPAAVLHPGSVSDVAATVRRVFQLGRSSPLTVAARGHGHSLLGQSQAAGGIVVKMESLAAAAARAVRVHGGASPHVDAPGGELWINVLHETLKHGLAPRSWTDYLHLTVGGTLSNAGVSGQAFRHGPQVSNVNQLEIVTGRGEVVTCSHEVNSDLFYAALGGLGQFGIITRARIALEPAPKMVRWIRVLYSDFETFTEDQEKLIASEKTFDYIEGFVIINRTGILNNWRTSFKPQDPVQASQFQSDGRVLYCLELTMNFNHDEADIMEQEVGALLSRLRYISSTLFYTDVTYLEFLDRVHTSELKLRAQGLWEVPHPWLNLLIPRSTVHKFAKEVFGKILKDSNNGPILLYPVNRTKWDNRTSVVIPDEEIFYLVGFLSSAPSSSGHGSVEHAMNLNNKIVDFCEKNGVGMKQYLAPYTTQKQWKAHFGARWETFERRKHTYDPLAILAPGQRIFPKASLPMSL</sequence>